<gene>
    <name evidence="1" type="primary">proS</name>
    <name type="ordered locus">TV1105</name>
    <name type="ORF">TVG1138861</name>
</gene>
<evidence type="ECO:0000255" key="1">
    <source>
        <dbReference type="HAMAP-Rule" id="MF_01571"/>
    </source>
</evidence>
<dbReference type="EC" id="6.1.1.15" evidence="1"/>
<dbReference type="EMBL" id="BA000011">
    <property type="protein sequence ID" value="BAB60247.1"/>
    <property type="molecule type" value="Genomic_DNA"/>
</dbReference>
<dbReference type="RefSeq" id="WP_010917339.1">
    <property type="nucleotide sequence ID" value="NC_002689.2"/>
</dbReference>
<dbReference type="SMR" id="Q979Q5"/>
<dbReference type="STRING" id="273116.gene:9381903"/>
<dbReference type="PaxDb" id="273116-14325343"/>
<dbReference type="GeneID" id="1441221"/>
<dbReference type="KEGG" id="tvo:TVG1138861"/>
<dbReference type="eggNOG" id="arCOG00402">
    <property type="taxonomic scope" value="Archaea"/>
</dbReference>
<dbReference type="HOGENOM" id="CLU_001882_4_2_2"/>
<dbReference type="OrthoDB" id="7375at2157"/>
<dbReference type="PhylomeDB" id="Q979Q5"/>
<dbReference type="Proteomes" id="UP000001017">
    <property type="component" value="Chromosome"/>
</dbReference>
<dbReference type="GO" id="GO:0017101">
    <property type="term" value="C:aminoacyl-tRNA synthetase multienzyme complex"/>
    <property type="evidence" value="ECO:0007669"/>
    <property type="project" value="TreeGrafter"/>
</dbReference>
<dbReference type="GO" id="GO:0005737">
    <property type="term" value="C:cytoplasm"/>
    <property type="evidence" value="ECO:0007669"/>
    <property type="project" value="UniProtKB-SubCell"/>
</dbReference>
<dbReference type="GO" id="GO:0005524">
    <property type="term" value="F:ATP binding"/>
    <property type="evidence" value="ECO:0007669"/>
    <property type="project" value="UniProtKB-UniRule"/>
</dbReference>
<dbReference type="GO" id="GO:0004827">
    <property type="term" value="F:proline-tRNA ligase activity"/>
    <property type="evidence" value="ECO:0007669"/>
    <property type="project" value="UniProtKB-UniRule"/>
</dbReference>
<dbReference type="GO" id="GO:0006433">
    <property type="term" value="P:prolyl-tRNA aminoacylation"/>
    <property type="evidence" value="ECO:0007669"/>
    <property type="project" value="UniProtKB-UniRule"/>
</dbReference>
<dbReference type="CDD" id="cd00862">
    <property type="entry name" value="ProRS_anticodon_zinc"/>
    <property type="match status" value="1"/>
</dbReference>
<dbReference type="CDD" id="cd00778">
    <property type="entry name" value="ProRS_core_arch_euk"/>
    <property type="match status" value="1"/>
</dbReference>
<dbReference type="FunFam" id="3.30.930.10:FF:000037">
    <property type="entry name" value="Proline--tRNA ligase"/>
    <property type="match status" value="1"/>
</dbReference>
<dbReference type="Gene3D" id="3.40.50.800">
    <property type="entry name" value="Anticodon-binding domain"/>
    <property type="match status" value="1"/>
</dbReference>
<dbReference type="Gene3D" id="3.30.930.10">
    <property type="entry name" value="Bira Bifunctional Protein, Domain 2"/>
    <property type="match status" value="1"/>
</dbReference>
<dbReference type="Gene3D" id="3.30.110.30">
    <property type="entry name" value="C-terminal domain of ProRS"/>
    <property type="match status" value="1"/>
</dbReference>
<dbReference type="HAMAP" id="MF_01571">
    <property type="entry name" value="Pro_tRNA_synth_type3"/>
    <property type="match status" value="1"/>
</dbReference>
<dbReference type="InterPro" id="IPR002314">
    <property type="entry name" value="aa-tRNA-synt_IIb"/>
</dbReference>
<dbReference type="InterPro" id="IPR006195">
    <property type="entry name" value="aa-tRNA-synth_II"/>
</dbReference>
<dbReference type="InterPro" id="IPR045864">
    <property type="entry name" value="aa-tRNA-synth_II/BPL/LPL"/>
</dbReference>
<dbReference type="InterPro" id="IPR004154">
    <property type="entry name" value="Anticodon-bd"/>
</dbReference>
<dbReference type="InterPro" id="IPR036621">
    <property type="entry name" value="Anticodon-bd_dom_sf"/>
</dbReference>
<dbReference type="InterPro" id="IPR002316">
    <property type="entry name" value="Pro-tRNA-ligase_IIa"/>
</dbReference>
<dbReference type="InterPro" id="IPR004499">
    <property type="entry name" value="Pro-tRNA-ligase_IIa_arc-type"/>
</dbReference>
<dbReference type="InterPro" id="IPR016061">
    <property type="entry name" value="Pro-tRNA_ligase_II_C"/>
</dbReference>
<dbReference type="InterPro" id="IPR017449">
    <property type="entry name" value="Pro-tRNA_synth_II"/>
</dbReference>
<dbReference type="InterPro" id="IPR033721">
    <property type="entry name" value="ProRS_core_arch_euk"/>
</dbReference>
<dbReference type="NCBIfam" id="TIGR00408">
    <property type="entry name" value="proS_fam_I"/>
    <property type="match status" value="1"/>
</dbReference>
<dbReference type="PANTHER" id="PTHR43382:SF2">
    <property type="entry name" value="BIFUNCTIONAL GLUTAMATE_PROLINE--TRNA LIGASE"/>
    <property type="match status" value="1"/>
</dbReference>
<dbReference type="PANTHER" id="PTHR43382">
    <property type="entry name" value="PROLYL-TRNA SYNTHETASE"/>
    <property type="match status" value="1"/>
</dbReference>
<dbReference type="Pfam" id="PF03129">
    <property type="entry name" value="HGTP_anticodon"/>
    <property type="match status" value="1"/>
</dbReference>
<dbReference type="Pfam" id="PF09180">
    <property type="entry name" value="ProRS-C_1"/>
    <property type="match status" value="1"/>
</dbReference>
<dbReference type="Pfam" id="PF00587">
    <property type="entry name" value="tRNA-synt_2b"/>
    <property type="match status" value="1"/>
</dbReference>
<dbReference type="PRINTS" id="PR01046">
    <property type="entry name" value="TRNASYNTHPRO"/>
</dbReference>
<dbReference type="SMART" id="SM00946">
    <property type="entry name" value="ProRS-C_1"/>
    <property type="match status" value="1"/>
</dbReference>
<dbReference type="SUPFAM" id="SSF64586">
    <property type="entry name" value="C-terminal domain of ProRS"/>
    <property type="match status" value="1"/>
</dbReference>
<dbReference type="SUPFAM" id="SSF52954">
    <property type="entry name" value="Class II aaRS ABD-related"/>
    <property type="match status" value="1"/>
</dbReference>
<dbReference type="SUPFAM" id="SSF55681">
    <property type="entry name" value="Class II aaRS and biotin synthetases"/>
    <property type="match status" value="1"/>
</dbReference>
<dbReference type="PROSITE" id="PS50862">
    <property type="entry name" value="AA_TRNA_LIGASE_II"/>
    <property type="match status" value="1"/>
</dbReference>
<sequence>MENKKENFSEWYNEIVTISDLSDKRYPIKGMNVWRPYGWKIMKLIDNIIRNAVDKHSFDEVNFPVLISRGMLEVEFEHIRGFENEIYWVTKGGKEKLEEELALRPTSESAMYPMFSLWVRSHADLPLKIYQIVSVYRYETKHTRSFIRIREIHFFEAHTAHESYEDAEKQMDEYRIIWTEIADALCLPFLYDQRPEWDKFPGAMYTIAFDTVMPSGRSLQIGTIHQYGTNFSKNYDIKYLKEDGTFEYVHQTTFGMSERLLAAIIGIHGDDKGLILPPAIAPIQVVIVPIPGEGVERYAKDIETTLNGIGIRCHVDNRDNYTPGYKYNDWEMRGVPLRIEVGERELKEKTVTLAARNIRGKKTVQREKLVYEVPDMLDLVKEKITEDAKKTFNSLVVSASSLDDFKKEGLIKAFWCGSKECSDKIENETEKSALGFNLNNDETGKCIVCGKAGKLAIFSRSY</sequence>
<protein>
    <recommendedName>
        <fullName evidence="1">Proline--tRNA ligase</fullName>
        <ecNumber evidence="1">6.1.1.15</ecNumber>
    </recommendedName>
    <alternativeName>
        <fullName evidence="1">Prolyl-tRNA synthetase</fullName>
        <shortName evidence="1">ProRS</shortName>
    </alternativeName>
</protein>
<proteinExistence type="inferred from homology"/>
<feature type="chain" id="PRO_0000249177" description="Proline--tRNA ligase">
    <location>
        <begin position="1"/>
        <end position="462"/>
    </location>
</feature>
<name>SYP_THEVO</name>
<comment type="function">
    <text evidence="1">Catalyzes the attachment of proline to tRNA(Pro) in a two-step reaction: proline is first activated by ATP to form Pro-AMP and then transferred to the acceptor end of tRNA(Pro).</text>
</comment>
<comment type="catalytic activity">
    <reaction evidence="1">
        <text>tRNA(Pro) + L-proline + ATP = L-prolyl-tRNA(Pro) + AMP + diphosphate</text>
        <dbReference type="Rhea" id="RHEA:14305"/>
        <dbReference type="Rhea" id="RHEA-COMP:9700"/>
        <dbReference type="Rhea" id="RHEA-COMP:9702"/>
        <dbReference type="ChEBI" id="CHEBI:30616"/>
        <dbReference type="ChEBI" id="CHEBI:33019"/>
        <dbReference type="ChEBI" id="CHEBI:60039"/>
        <dbReference type="ChEBI" id="CHEBI:78442"/>
        <dbReference type="ChEBI" id="CHEBI:78532"/>
        <dbReference type="ChEBI" id="CHEBI:456215"/>
        <dbReference type="EC" id="6.1.1.15"/>
    </reaction>
</comment>
<comment type="subunit">
    <text evidence="1">Homodimer.</text>
</comment>
<comment type="subcellular location">
    <subcellularLocation>
        <location evidence="1">Cytoplasm</location>
    </subcellularLocation>
</comment>
<comment type="domain">
    <text evidence="1">Consists of three domains: the N-terminal catalytic domain, the anticodon-binding domain and the C-terminal extension.</text>
</comment>
<comment type="similarity">
    <text evidence="1">Belongs to the class-II aminoacyl-tRNA synthetase family. ProS type 3 subfamily.</text>
</comment>
<reference key="1">
    <citation type="journal article" date="2000" name="Proc. Natl. Acad. Sci. U.S.A.">
        <title>Archaeal adaptation to higher temperatures revealed by genomic sequence of Thermoplasma volcanium.</title>
        <authorList>
            <person name="Kawashima T."/>
            <person name="Amano N."/>
            <person name="Koike H."/>
            <person name="Makino S."/>
            <person name="Higuchi S."/>
            <person name="Kawashima-Ohya Y."/>
            <person name="Watanabe K."/>
            <person name="Yamazaki M."/>
            <person name="Kanehori K."/>
            <person name="Kawamoto T."/>
            <person name="Nunoshiba T."/>
            <person name="Yamamoto Y."/>
            <person name="Aramaki H."/>
            <person name="Makino K."/>
            <person name="Suzuki M."/>
        </authorList>
    </citation>
    <scope>NUCLEOTIDE SEQUENCE [LARGE SCALE GENOMIC DNA]</scope>
    <source>
        <strain>ATCC 51530 / DSM 4299 / JCM 9571 / NBRC 15438 / GSS1</strain>
    </source>
</reference>
<organism>
    <name type="scientific">Thermoplasma volcanium (strain ATCC 51530 / DSM 4299 / JCM 9571 / NBRC 15438 / GSS1)</name>
    <dbReference type="NCBI Taxonomy" id="273116"/>
    <lineage>
        <taxon>Archaea</taxon>
        <taxon>Methanobacteriati</taxon>
        <taxon>Thermoplasmatota</taxon>
        <taxon>Thermoplasmata</taxon>
        <taxon>Thermoplasmatales</taxon>
        <taxon>Thermoplasmataceae</taxon>
        <taxon>Thermoplasma</taxon>
    </lineage>
</organism>
<keyword id="KW-0030">Aminoacyl-tRNA synthetase</keyword>
<keyword id="KW-0067">ATP-binding</keyword>
<keyword id="KW-0963">Cytoplasm</keyword>
<keyword id="KW-0436">Ligase</keyword>
<keyword id="KW-0547">Nucleotide-binding</keyword>
<keyword id="KW-0648">Protein biosynthesis</keyword>
<accession>Q979Q5</accession>